<gene>
    <name type="ORF">ORF1</name>
</gene>
<keyword id="KW-0067">ATP-binding</keyword>
<keyword id="KW-1015">Disulfide bond</keyword>
<keyword id="KW-0347">Helicase</keyword>
<keyword id="KW-1035">Host cytoplasm</keyword>
<keyword id="KW-0378">Hydrolase</keyword>
<keyword id="KW-0460">Magnesium</keyword>
<keyword id="KW-0479">Metal-binding</keyword>
<keyword id="KW-0489">Methyltransferase</keyword>
<keyword id="KW-0547">Nucleotide-binding</keyword>
<keyword id="KW-0548">Nucleotidyltransferase</keyword>
<keyword id="KW-0645">Protease</keyword>
<keyword id="KW-0694">RNA-binding</keyword>
<keyword id="KW-0696">RNA-directed RNA polymerase</keyword>
<keyword id="KW-0788">Thiol protease</keyword>
<keyword id="KW-0808">Transferase</keyword>
<keyword id="KW-0693">Viral RNA replication</keyword>
<keyword id="KW-0862">Zinc</keyword>
<protein>
    <recommendedName>
        <fullName>Non-structural polyprotein pORF1</fullName>
    </recommendedName>
    <domain>
        <recommendedName>
            <fullName>Methyltransferase</fullName>
            <ecNumber evidence="2">2.1.1.-</ecNumber>
            <ecNumber evidence="3">2.7.7.-</ecNumber>
        </recommendedName>
    </domain>
    <domain>
        <recommendedName>
            <fullName>Putative protease</fullName>
            <ecNumber evidence="3">3.4.-.-</ecNumber>
        </recommendedName>
        <alternativeName>
            <fullName evidence="1">Putative papain-like cysteine protease</fullName>
            <shortName evidence="1">PCP</shortName>
        </alternativeName>
    </domain>
    <domain>
        <recommendedName>
            <fullName>NTPase/helicase</fullName>
            <ecNumber evidence="3">3.6.4.-</ecNumber>
        </recommendedName>
    </domain>
    <domain>
        <recommendedName>
            <fullName>RNA-directed RNA polymerase</fullName>
            <shortName>RdRp</shortName>
            <ecNumber>2.7.7.48</ecNumber>
        </recommendedName>
    </domain>
</protein>
<organismHost>
    <name type="scientific">Homo sapiens</name>
    <name type="common">Human</name>
    <dbReference type="NCBI Taxonomy" id="9606"/>
</organismHost>
<feature type="chain" id="PRO_0000100132" description="Non-structural polyprotein pORF1">
    <location>
        <begin position="1"/>
        <end position="1693"/>
    </location>
</feature>
<feature type="domain" description="Alphavirus-like MT" evidence="8">
    <location>
        <begin position="56"/>
        <end position="240"/>
    </location>
</feature>
<feature type="domain" description="Macro" evidence="6">
    <location>
        <begin position="775"/>
        <end position="921"/>
    </location>
</feature>
<feature type="domain" description="(+)RNA virus helicase ATP-binding">
    <location>
        <begin position="934"/>
        <end position="1082"/>
    </location>
</feature>
<feature type="domain" description="(+)RNA virus helicase C-terminal">
    <location>
        <begin position="1083"/>
        <end position="1216"/>
    </location>
</feature>
<feature type="domain" description="RdRp catalytic" evidence="7">
    <location>
        <begin position="1454"/>
        <end position="1565"/>
    </location>
</feature>
<feature type="region of interest" description="Methyltransferase">
    <location>
        <begin position="60"/>
        <end position="240"/>
    </location>
</feature>
<feature type="region of interest" description="Y-domain" evidence="3">
    <location>
        <begin position="241"/>
        <end position="439"/>
    </location>
</feature>
<feature type="region of interest" description="Putative protease" evidence="1">
    <location>
        <begin position="442"/>
        <end position="509"/>
    </location>
</feature>
<feature type="region of interest" description="Zinc-binding" evidence="1">
    <location>
        <begin position="510"/>
        <end position="691"/>
    </location>
</feature>
<feature type="region of interest" description="Hinge">
    <location>
        <begin position="712"/>
        <end position="778"/>
    </location>
</feature>
<feature type="region of interest" description="Disordered" evidence="9">
    <location>
        <begin position="732"/>
        <end position="768"/>
    </location>
</feature>
<feature type="region of interest" description="X-domain">
    <location>
        <begin position="785"/>
        <end position="942"/>
    </location>
</feature>
<feature type="region of interest" description="NTPase/helicase">
    <location>
        <begin position="960"/>
        <end position="1204"/>
    </location>
</feature>
<feature type="region of interest" description="RNA-directed RNA polymerase">
    <location>
        <begin position="1207"/>
        <end position="1693"/>
    </location>
</feature>
<feature type="compositionally biased region" description="Pro residues" evidence="9">
    <location>
        <begin position="739"/>
        <end position="753"/>
    </location>
</feature>
<feature type="compositionally biased region" description="Low complexity" evidence="9">
    <location>
        <begin position="754"/>
        <end position="768"/>
    </location>
</feature>
<feature type="binding site" evidence="1">
    <location>
        <position position="671"/>
    </location>
    <ligand>
        <name>Zn(2+)</name>
        <dbReference type="ChEBI" id="CHEBI:29105"/>
    </ligand>
</feature>
<feature type="binding site" evidence="1">
    <location>
        <position position="673"/>
    </location>
    <ligand>
        <name>Zn(2+)</name>
        <dbReference type="ChEBI" id="CHEBI:29105"/>
    </ligand>
</feature>
<feature type="binding site" evidence="1">
    <location>
        <position position="686"/>
    </location>
    <ligand>
        <name>Zn(2+)</name>
        <dbReference type="ChEBI" id="CHEBI:29105"/>
    </ligand>
</feature>
<feature type="binding site" evidence="5">
    <location>
        <begin position="975"/>
        <end position="982"/>
    </location>
    <ligand>
        <name>ATP</name>
        <dbReference type="ChEBI" id="CHEBI:30616"/>
    </ligand>
</feature>
<feature type="disulfide bond" evidence="3">
    <location>
        <begin position="434"/>
        <end position="481"/>
    </location>
</feature>
<feature type="mutagenesis site" description="70% loss of ATPase activity; complete loss of unwinding ability." evidence="10">
    <original>K</original>
    <variation>A</variation>
    <location>
        <position position="981"/>
    </location>
</feature>
<feature type="mutagenesis site" description="50% loss of ATPase activity; complete loss of unwinding ability." evidence="10">
    <original>DE</original>
    <variation>AA</variation>
    <location>
        <begin position="1029"/>
        <end position="1030"/>
    </location>
</feature>
<accession>P29324</accession>
<accession>Q81873</accession>
<proteinExistence type="evidence at protein level"/>
<dbReference type="EC" id="2.1.1.-" evidence="2"/>
<dbReference type="EC" id="2.7.7.-" evidence="3"/>
<dbReference type="EC" id="3.4.-.-" evidence="3"/>
<dbReference type="EC" id="3.6.4.-" evidence="3"/>
<dbReference type="EC" id="2.7.7.48"/>
<dbReference type="EMBL" id="M73218">
    <property type="protein sequence ID" value="AAA45734.1"/>
    <property type="molecule type" value="Genomic_RNA"/>
</dbReference>
<dbReference type="EMBL" id="M32400">
    <property type="protein sequence ID" value="AAA03206.1"/>
    <property type="molecule type" value="mRNA"/>
</dbReference>
<dbReference type="PIR" id="A40778">
    <property type="entry name" value="MNWWHE"/>
</dbReference>
<dbReference type="SMR" id="P29324"/>
<dbReference type="Proteomes" id="UP000007243">
    <property type="component" value="Segment"/>
</dbReference>
<dbReference type="GO" id="GO:0044220">
    <property type="term" value="C:host cell perinuclear region of cytoplasm"/>
    <property type="evidence" value="ECO:0007669"/>
    <property type="project" value="UniProtKB-SubCell"/>
</dbReference>
<dbReference type="GO" id="GO:0005524">
    <property type="term" value="F:ATP binding"/>
    <property type="evidence" value="ECO:0007669"/>
    <property type="project" value="UniProtKB-KW"/>
</dbReference>
<dbReference type="GO" id="GO:0008234">
    <property type="term" value="F:cysteine-type peptidase activity"/>
    <property type="evidence" value="ECO:0007669"/>
    <property type="project" value="UniProtKB-KW"/>
</dbReference>
<dbReference type="GO" id="GO:0004386">
    <property type="term" value="F:helicase activity"/>
    <property type="evidence" value="ECO:0007669"/>
    <property type="project" value="UniProtKB-KW"/>
</dbReference>
<dbReference type="GO" id="GO:0046872">
    <property type="term" value="F:metal ion binding"/>
    <property type="evidence" value="ECO:0007669"/>
    <property type="project" value="UniProtKB-KW"/>
</dbReference>
<dbReference type="GO" id="GO:0008174">
    <property type="term" value="F:mRNA methyltransferase activity"/>
    <property type="evidence" value="ECO:0007669"/>
    <property type="project" value="InterPro"/>
</dbReference>
<dbReference type="GO" id="GO:0003723">
    <property type="term" value="F:RNA binding"/>
    <property type="evidence" value="ECO:0007669"/>
    <property type="project" value="UniProtKB-KW"/>
</dbReference>
<dbReference type="GO" id="GO:0003968">
    <property type="term" value="F:RNA-directed RNA polymerase activity"/>
    <property type="evidence" value="ECO:0007669"/>
    <property type="project" value="UniProtKB-KW"/>
</dbReference>
<dbReference type="GO" id="GO:0006351">
    <property type="term" value="P:DNA-templated transcription"/>
    <property type="evidence" value="ECO:0007669"/>
    <property type="project" value="InterPro"/>
</dbReference>
<dbReference type="GO" id="GO:0032259">
    <property type="term" value="P:methylation"/>
    <property type="evidence" value="ECO:0007669"/>
    <property type="project" value="UniProtKB-KW"/>
</dbReference>
<dbReference type="GO" id="GO:0016556">
    <property type="term" value="P:mRNA modification"/>
    <property type="evidence" value="ECO:0007669"/>
    <property type="project" value="InterPro"/>
</dbReference>
<dbReference type="GO" id="GO:0006508">
    <property type="term" value="P:proteolysis"/>
    <property type="evidence" value="ECO:0007669"/>
    <property type="project" value="UniProtKB-KW"/>
</dbReference>
<dbReference type="GO" id="GO:0006396">
    <property type="term" value="P:RNA processing"/>
    <property type="evidence" value="ECO:0007669"/>
    <property type="project" value="InterPro"/>
</dbReference>
<dbReference type="GO" id="GO:0019082">
    <property type="term" value="P:viral protein processing"/>
    <property type="evidence" value="ECO:0007669"/>
    <property type="project" value="InterPro"/>
</dbReference>
<dbReference type="GO" id="GO:0039694">
    <property type="term" value="P:viral RNA genome replication"/>
    <property type="evidence" value="ECO:0007669"/>
    <property type="project" value="InterPro"/>
</dbReference>
<dbReference type="CDD" id="cd23259">
    <property type="entry name" value="Hepeviridae_RdRp"/>
    <property type="match status" value="1"/>
</dbReference>
<dbReference type="CDD" id="cd21557">
    <property type="entry name" value="Macro_X_Nsp3-like"/>
    <property type="match status" value="1"/>
</dbReference>
<dbReference type="Gene3D" id="3.40.220.10">
    <property type="entry name" value="Leucine Aminopeptidase, subunit E, domain 1"/>
    <property type="match status" value="1"/>
</dbReference>
<dbReference type="Gene3D" id="3.40.50.300">
    <property type="entry name" value="P-loop containing nucleotide triphosphate hydrolases"/>
    <property type="match status" value="2"/>
</dbReference>
<dbReference type="InterPro" id="IPR027351">
    <property type="entry name" value="(+)RNA_virus_helicase_core_dom"/>
</dbReference>
<dbReference type="InterPro" id="IPR002588">
    <property type="entry name" value="Alphavirus-like_MT_dom"/>
</dbReference>
<dbReference type="InterPro" id="IPR043502">
    <property type="entry name" value="DNA/RNA_pol_sf"/>
</dbReference>
<dbReference type="InterPro" id="IPR008748">
    <property type="entry name" value="Hepatitis-E_Cys-pept"/>
</dbReference>
<dbReference type="InterPro" id="IPR022202">
    <property type="entry name" value="Hepatitis-E_hinge"/>
</dbReference>
<dbReference type="InterPro" id="IPR047307">
    <property type="entry name" value="Hepeviridae_RdRp"/>
</dbReference>
<dbReference type="InterPro" id="IPR002589">
    <property type="entry name" value="Macro_dom"/>
</dbReference>
<dbReference type="InterPro" id="IPR043472">
    <property type="entry name" value="Macro_dom-like"/>
</dbReference>
<dbReference type="InterPro" id="IPR044371">
    <property type="entry name" value="Macro_X_NSP3-like"/>
</dbReference>
<dbReference type="InterPro" id="IPR027417">
    <property type="entry name" value="P-loop_NTPase"/>
</dbReference>
<dbReference type="InterPro" id="IPR001788">
    <property type="entry name" value="RNA-dep_RNA_pol_alsuvir"/>
</dbReference>
<dbReference type="InterPro" id="IPR007094">
    <property type="entry name" value="RNA-dir_pol_PSvirus"/>
</dbReference>
<dbReference type="Pfam" id="PF12526">
    <property type="entry name" value="DUF3729"/>
    <property type="match status" value="1"/>
</dbReference>
<dbReference type="Pfam" id="PF01661">
    <property type="entry name" value="Macro"/>
    <property type="match status" value="1"/>
</dbReference>
<dbReference type="Pfam" id="PF05417">
    <property type="entry name" value="Peptidase_C41"/>
    <property type="match status" value="1"/>
</dbReference>
<dbReference type="Pfam" id="PF00978">
    <property type="entry name" value="RdRP_2"/>
    <property type="match status" value="1"/>
</dbReference>
<dbReference type="Pfam" id="PF01443">
    <property type="entry name" value="Viral_helicase1"/>
    <property type="match status" value="1"/>
</dbReference>
<dbReference type="Pfam" id="PF01660">
    <property type="entry name" value="Vmethyltransf"/>
    <property type="match status" value="1"/>
</dbReference>
<dbReference type="SMART" id="SM00506">
    <property type="entry name" value="A1pp"/>
    <property type="match status" value="1"/>
</dbReference>
<dbReference type="SUPFAM" id="SSF56672">
    <property type="entry name" value="DNA/RNA polymerases"/>
    <property type="match status" value="1"/>
</dbReference>
<dbReference type="SUPFAM" id="SSF52949">
    <property type="entry name" value="Macro domain-like"/>
    <property type="match status" value="1"/>
</dbReference>
<dbReference type="SUPFAM" id="SSF52540">
    <property type="entry name" value="P-loop containing nucleoside triphosphate hydrolases"/>
    <property type="match status" value="1"/>
</dbReference>
<dbReference type="PROSITE" id="PS51743">
    <property type="entry name" value="ALPHAVIRUS_MT"/>
    <property type="match status" value="1"/>
</dbReference>
<dbReference type="PROSITE" id="PS51154">
    <property type="entry name" value="MACRO"/>
    <property type="match status" value="1"/>
</dbReference>
<dbReference type="PROSITE" id="PS51657">
    <property type="entry name" value="PSRV_HELICASE"/>
    <property type="match status" value="1"/>
</dbReference>
<dbReference type="PROSITE" id="PS50507">
    <property type="entry name" value="RDRP_SSRNA_POS"/>
    <property type="match status" value="1"/>
</dbReference>
<evidence type="ECO:0000250" key="1">
    <source>
        <dbReference type="UniProtKB" id="P33424"/>
    </source>
</evidence>
<evidence type="ECO:0000250" key="2">
    <source>
        <dbReference type="UniProtKB" id="Q04610"/>
    </source>
</evidence>
<evidence type="ECO:0000250" key="3">
    <source>
        <dbReference type="UniProtKB" id="Q81862"/>
    </source>
</evidence>
<evidence type="ECO:0000250" key="4">
    <source>
        <dbReference type="UniProtKB" id="Q9WC28"/>
    </source>
</evidence>
<evidence type="ECO:0000255" key="5"/>
<evidence type="ECO:0000255" key="6">
    <source>
        <dbReference type="PROSITE-ProRule" id="PRU00490"/>
    </source>
</evidence>
<evidence type="ECO:0000255" key="7">
    <source>
        <dbReference type="PROSITE-ProRule" id="PRU00539"/>
    </source>
</evidence>
<evidence type="ECO:0000255" key="8">
    <source>
        <dbReference type="PROSITE-ProRule" id="PRU01079"/>
    </source>
</evidence>
<evidence type="ECO:0000256" key="9">
    <source>
        <dbReference type="SAM" id="MobiDB-lite"/>
    </source>
</evidence>
<evidence type="ECO:0000269" key="10">
    <source>
    </source>
</evidence>
<evidence type="ECO:0000305" key="11"/>
<organism>
    <name type="scientific">Hepatitis E virus genotype 1 (isolate Human/Burma)</name>
    <name type="common">HEV-1</name>
    <dbReference type="NCBI Taxonomy" id="31767"/>
    <lineage>
        <taxon>Viruses</taxon>
        <taxon>Riboviria</taxon>
        <taxon>Orthornavirae</taxon>
        <taxon>Kitrinoviricota</taxon>
        <taxon>Alsuviricetes</taxon>
        <taxon>Hepelivirales</taxon>
        <taxon>Hepeviridae</taxon>
        <taxon>Orthohepevirinae</taxon>
        <taxon>Paslahepevirus</taxon>
        <taxon>Hepatitis E virus</taxon>
    </lineage>
</organism>
<reference key="1">
    <citation type="journal article" date="1991" name="Virology">
        <title>Hepatitis E virus (HEV): molecular cloning and sequencing of the full-length viral genome.</title>
        <authorList>
            <person name="Tam A.W."/>
            <person name="Smith M.M."/>
            <person name="Guerra M.E."/>
            <person name="Huang C.-C."/>
            <person name="Bradley D.W."/>
            <person name="Fry K.E."/>
            <person name="Reyes G.R."/>
        </authorList>
    </citation>
    <scope>NUCLEOTIDE SEQUENCE [GENOMIC RNA]</scope>
</reference>
<reference key="2">
    <citation type="journal article" date="1990" name="Science">
        <title>Isolation of a cDNA from the virus responsible for enterically transmitted non-A, non-B hepatitis.</title>
        <authorList>
            <person name="Reyes G.R."/>
            <person name="Purdy M.A."/>
            <person name="Kim J.P."/>
            <person name="Luk K.-C."/>
            <person name="Young L.M."/>
            <person name="Fry K.E."/>
            <person name="Bradley D.W."/>
        </authorList>
    </citation>
    <scope>NUCLEOTIDE SEQUENCE [MRNA] OF 967-1693</scope>
</reference>
<reference key="3">
    <citation type="journal article" date="1992" name="Virus Genes">
        <title>Hepatitis E virus (HEV): strain variation in the nonstructural gene region encoding consensus motifs for an RNA-dependent RNA polymerase and an ATP/GTP binding site.</title>
        <authorList>
            <person name="Fry K.E."/>
            <person name="Tam A.W."/>
            <person name="Smith M.M."/>
            <person name="Kim J.P."/>
            <person name="Luk K.-C."/>
            <person name="Young L.M."/>
            <person name="Piatak M."/>
            <person name="Feldman R.A."/>
            <person name="Yun K.Y."/>
            <person name="Purdy M.A."/>
            <person name="McCaustland K.A."/>
            <person name="Bradley D.W."/>
            <person name="Reyes G.R."/>
        </authorList>
    </citation>
    <scope>IDENTIFICATION</scope>
</reference>
<reference key="4">
    <citation type="journal article" date="2006" name="Virol. J.">
        <title>Expression and processing of the Hepatitis E virus ORF1 nonstructural polyprotein.</title>
        <authorList>
            <person name="Sehgal D."/>
            <person name="Thomas S."/>
            <person name="Chakraborty M."/>
            <person name="Jameel S."/>
        </authorList>
    </citation>
    <scope>POSSIBLE PROTEOLYTIC PROCESSING</scope>
</reference>
<reference key="5">
    <citation type="journal article" date="2010" name="J. Virol.">
        <title>NTPase and 5' to 3' RNA duplex-unwinding activities of the hepatitis E virus helicase domain.</title>
        <authorList>
            <person name="Karpe Y.A."/>
            <person name="Lole K.S."/>
        </authorList>
    </citation>
    <scope>FUNCTION (NTPASE/HELICASE)</scope>
    <scope>MUTAGENESIS OF LYS-981 AND 1029-ASP-GLU-1030</scope>
    <source>
        <strain>Isolate Human/India/Lole/2000</strain>
    </source>
</reference>
<name>POLN_HEVBU</name>
<sequence length="1693" mass="185192">MEAHQFIKAPGITTAIEQAALAAANSALANAVVVRPFLSHQQIEILINLMQPRQLVFRPEVFWNHPIQRVIHNELELYCRARSGRCLEIGAHPRSINDNPNVVHRCFLRPVGRDVQRWYTAPTRGPAANCRRSALRGLPAADRTYCLDGFSGCNFPAETGIALYSLHDMSPSDVAEAMFRHGMTRLYAALHLPPEVLLPPGTYRTASYLLIHDGRRVVVTYEGDTSAGYNHDVSNLRSWIRTTKVTGDHPLVIERVRAIGCHFVLLLTAAPEPSPMPYVPYPRSTEVYVRSIFGPGGTPSLFPTSCSTKSTFHAVPAHIWDRLMLFGATLDDQAFCCSRLMTYLRGISYKVTVGTLVANEGWNASEDALTAVITAAYLTICHQRYLRTQAISKGMRRLEREHAQKFITRLYSWLFEKSGRDYIPGRQLEFYAQCRRWLSAGFHLDPRVLVFDESAPCHCRTAIRKALSKFCCFMKWLGQECTCFLQPAEGAVGDQGHDNEAYEGSDVDPAESAISDISGSYVVPGTALQPLYQALDLPAEIVARAGRLTATVKVSQVDGRIDCETLLGNKTFRTSFVDGAVLETNGPERHNLSFDASQSTMAAGPFSLTYAASAAGLEVRYVAAGLDHRAVFAPGVSPRSAPGEVTAFCSALYRFNREAQRHSLIGNLWFHPEGLIGLFAPFSPGHVWESANPFCGESTLYTRTWSEVDAVSSPARPDLGFMSEPSIPSRAATPTLAAPLPPPAPDPSPPPSAPALAEPASGATAGAPAITHQTARHRRLLFTYPDGSKVFAGSLFESTCTWLVNASNVDHRPGGGLCHAFYQRYPASFDAASFVMRDGAAAYTLTPRPIIHAVAPDYRLEHNPKRLEAAYRETCSRLGTAAYPLLGTGIYQVPIGPSFDAWERNHRPGDELYLPELAARWFEANRPTRPTLTITEDVARTANLAIELDSATDVGRACAGCRVTPGVVQYQFTAGVPGSGKSRSITQADVDVVVVPTRELRNAWRRRGFAAFTPHTAARVTQGRRVVIDEAPSLPPHLLLLHMQRAATVHLLGDPNQIPAIDFEHAGLVPAIRPDLGPTSWWHVTHRWPADVCELIRGAYPMIQTTSRVLRSLFWGEPAVGQKLVFTQAAKPANPGSVTVHEAQGATYTETTIIATADARGLIQSSRAHAIVALTRHTEKCVIIDAPGLLREVGISDAIVNNFFLAGGEIGHQRPSVIPRGNPDANVDTLAAFPPSCQISAFHQLAEELGHRPVPVAAVLPPCPELEQGLLYLPQELTTCDSVVTFELTDIVHCRMAAPSQRKAVLSTLVGRYGGRTKLYNASHSDVRDSLARFIPAIGPVQVTTCELYELVEAMVEKGQDGSAVLELDLCNRDVSRITFFQKDCNKFTTGETIAHGKVGQGISAWSKTFCALFGPWFRAIEKAILALLPQGVFYGDAFDDTVFSAAVAAAKASMVFENDFSEFDSTQNNFSLGLECAIMEECGMPQWLIRLYHLIRSAWILQAPKESLRGFWKKHSGEPGTLLWNTVWNMAVITHCYDFRDFQVAAFKGDDSIVLCSEYRQSPGAAVLIAGCGLKLKVDFRPIGLYAGVVVAPGLGALPDVVRFAGRLTEKNWGPGPERAEQLRLAVSDFLRKLTNVAQMCVDVVSRVYGVSPGLVHNLIGMLQAVADGKAHFTESVKPVLDLTNSILCRVE</sequence>
<comment type="function">
    <text evidence="3">Methyltransferase: Displays a capping enzyme activity. This function is necessary since all viral RNAs are synthesized in the cytoplasm, and host capping enzymes are restricted to the nucleus. The enzymatic reaction involves a covalent link between 7-methyl-GMP and the methyltransferase, whereas eukaryotic capping enzymes form a covalent complex only with GMP. Methyltransferase catalyzes transfer of a methyl group from S-adenosylmethionine to GTP and GDP to yield m(7)GTP or m(7)GDP. GDP is a better substrate than GTP. This enzyme also displays guanylyltransferase activity to form a covalent complex, methyltransferase-m(7)GMP, from which 7-methyl-GMP is transferred to the mRNA to create the cap structure.</text>
</comment>
<comment type="function">
    <text evidence="3">Y-domain: Indispensable for virus replication.</text>
</comment>
<comment type="function">
    <text evidence="3">Putative protease: The putative protease domain although necessary for replication of the virus may not be a protease but rather a structural Zn(2+)-binding domain. Inhibits induction of IFN-beta by MDA5 and RIG-I pathways and down-regulates the expression of MDA5.</text>
</comment>
<comment type="function">
    <text evidence="10">NTPase/helicase: Multi-functional protein that exhibits NTPase and RNA unwinding activities (PubMed:20071563). Hydrolyzes all NTPs efficiently and unwinds RNA duplexes containing 5' overhangs (PubMed:20071563). Possesses a sequence independent RNA-5'-triphosphatase (RTPase) activity suggestive of its role in forming viral cap structure. Also participates in viral genome replication, RNA translocation and genome packaging/unpackaging (PubMed:20071563).</text>
</comment>
<comment type="function">
    <text evidence="3 4">RNA-directed RNA polymerase: Plays an essential role in the virus replication (By similarity). Binds to the 3'-end of the genomic RNA to initiate viral replication (By similarity).</text>
</comment>
<comment type="catalytic activity">
    <reaction evidence="7">
        <text>RNA(n) + a ribonucleoside 5'-triphosphate = RNA(n+1) + diphosphate</text>
        <dbReference type="Rhea" id="RHEA:21248"/>
        <dbReference type="Rhea" id="RHEA-COMP:14527"/>
        <dbReference type="Rhea" id="RHEA-COMP:17342"/>
        <dbReference type="ChEBI" id="CHEBI:33019"/>
        <dbReference type="ChEBI" id="CHEBI:61557"/>
        <dbReference type="ChEBI" id="CHEBI:140395"/>
        <dbReference type="EC" id="2.7.7.48"/>
    </reaction>
</comment>
<comment type="catalytic activity">
    <reaction evidence="3">
        <text>GTP + S-adenosyl-L-methionine = N(7)-methyl-GTP + S-adenosyl-L-homocysteine</text>
        <dbReference type="Rhea" id="RHEA:46948"/>
        <dbReference type="ChEBI" id="CHEBI:37565"/>
        <dbReference type="ChEBI" id="CHEBI:57856"/>
        <dbReference type="ChEBI" id="CHEBI:59789"/>
        <dbReference type="ChEBI" id="CHEBI:87133"/>
    </reaction>
    <physiologicalReaction direction="left-to-right" evidence="3">
        <dbReference type="Rhea" id="RHEA:46949"/>
    </physiologicalReaction>
</comment>
<comment type="cofactor">
    <cofactor evidence="3">
        <name>Mg(2+)</name>
        <dbReference type="ChEBI" id="CHEBI:18420"/>
    </cofactor>
    <text evidence="3">For methyltransferase activity.</text>
</comment>
<comment type="activity regulation">
    <text evidence="3">Putative protease: Inhibited by chymostatin.</text>
</comment>
<comment type="subunit">
    <text evidence="1">The protease domain interacts with host EIF2AK4 (via C-terminus); this interaction inhibits dimerization of EIF2AK4 and prevents EIF2AK4-mediated phosphorylation of host EIF2A.</text>
</comment>
<comment type="subcellular location">
    <subcellularLocation>
        <location evidence="3">Host cytoplasm</location>
    </subcellularLocation>
    <subcellularLocation>
        <location evidence="3">Host cytoplasm</location>
        <location evidence="3">Host perinuclear region</location>
    </subcellularLocation>
</comment>
<comment type="domain">
    <text evidence="1 3">Contains a methyltransferase domain, a Y-domain, a putative protease region, a zinc-binding region with similarity to calycins, a proline-rich disordered hypervariable region (HVR), a macro domain (also called X-domain), a helicase domain and an RNA-dependent RNA polymerase domain (By similarity). Since the boundaries and the activity of the putative protease are not clearly defined, the zinc-binding region might be part of the putative protease (By similarity).</text>
</comment>
<comment type="PTM">
    <text evidence="3">ORF1 polyprotein does not seem to be processed into distinct enzymatic domains by a viral protease belonging to ORF1, but could be processed by a host serine protease like thrombin.</text>
</comment>
<comment type="similarity">
    <text evidence="11">Belongs to the hepevirus non-structural polyprotein family.</text>
</comment>